<dbReference type="GO" id="GO:0005576">
    <property type="term" value="C:extracellular region"/>
    <property type="evidence" value="ECO:0007669"/>
    <property type="project" value="UniProtKB-SubCell"/>
</dbReference>
<dbReference type="GO" id="GO:0007218">
    <property type="term" value="P:neuropeptide signaling pathway"/>
    <property type="evidence" value="ECO:0007669"/>
    <property type="project" value="UniProtKB-KW"/>
</dbReference>
<dbReference type="InterPro" id="IPR013231">
    <property type="entry name" value="Periviscerokinin"/>
</dbReference>
<dbReference type="Pfam" id="PF08259">
    <property type="entry name" value="Periviscerokin"/>
    <property type="match status" value="1"/>
</dbReference>
<comment type="function">
    <text evidence="1">Mediates visceral muscle contractile activity (myotropic activity).</text>
</comment>
<comment type="subcellular location">
    <subcellularLocation>
        <location>Secreted</location>
    </subcellularLocation>
</comment>
<comment type="mass spectrometry"/>
<comment type="similarity">
    <text evidence="3">Belongs to the periviscerokinin family.</text>
</comment>
<proteinExistence type="evidence at protein level"/>
<name>PVK2_BLACR</name>
<reference key="1">
    <citation type="journal article" date="2000" name="Eur. J. Biochem.">
        <title>Identification of novel periviscerokinins from single neurohaemal release sites in insects. MS/MS fragmentation complemented by Edman degradation.</title>
        <authorList>
            <person name="Predel R."/>
            <person name="Kellner R."/>
            <person name="Baggerman G."/>
            <person name="Steinmetzer T."/>
            <person name="Schoofs L."/>
        </authorList>
    </citation>
    <scope>PROTEIN SEQUENCE</scope>
    <scope>FUNCTION</scope>
    <scope>MASS SPECTROMETRY</scope>
    <scope>AMIDATION AT VAL-11</scope>
    <source>
        <tissue>Abdominal perisympathetic organs</tissue>
    </source>
</reference>
<reference key="2">
    <citation type="journal article" date="2009" name="BMC Evol. Biol.">
        <title>A proteomic approach for studying insect phylogeny: CAPA peptides of ancient insect taxa (Dictyoptera, Blattoptera) as a test case.</title>
        <authorList>
            <person name="Roth S."/>
            <person name="Fromm B."/>
            <person name="Gaede G."/>
            <person name="Predel R."/>
        </authorList>
    </citation>
    <scope>PROTEIN SEQUENCE</scope>
    <scope>AMIDATION AT VAL-11</scope>
    <source>
        <tissue>Abdominal perisympathetic organs</tissue>
    </source>
</reference>
<feature type="peptide" id="PRO_0000044254" description="Periviscerokinin-2">
    <location>
        <begin position="1"/>
        <end position="11"/>
    </location>
</feature>
<feature type="modified residue" description="Valine amide" evidence="1 2">
    <location>
        <position position="11"/>
    </location>
</feature>
<evidence type="ECO:0000269" key="1">
    <source>
    </source>
</evidence>
<evidence type="ECO:0000269" key="2">
    <source>
    </source>
</evidence>
<evidence type="ECO:0000305" key="3"/>
<keyword id="KW-0027">Amidation</keyword>
<keyword id="KW-0903">Direct protein sequencing</keyword>
<keyword id="KW-0527">Neuropeptide</keyword>
<keyword id="KW-0964">Secreted</keyword>
<protein>
    <recommendedName>
        <fullName>Periviscerokinin-2</fullName>
        <shortName>BlaCr-PVK-2</shortName>
        <shortName>PVK-2</shortName>
    </recommendedName>
</protein>
<accession>P83928</accession>
<accession>P82699</accession>
<organism>
    <name type="scientific">Blaberus craniifer</name>
    <name type="common">Death's head cockroach</name>
    <dbReference type="NCBI Taxonomy" id="6982"/>
    <lineage>
        <taxon>Eukaryota</taxon>
        <taxon>Metazoa</taxon>
        <taxon>Ecdysozoa</taxon>
        <taxon>Arthropoda</taxon>
        <taxon>Hexapoda</taxon>
        <taxon>Insecta</taxon>
        <taxon>Pterygota</taxon>
        <taxon>Neoptera</taxon>
        <taxon>Polyneoptera</taxon>
        <taxon>Dictyoptera</taxon>
        <taxon>Blattodea</taxon>
        <taxon>Blaberoidea</taxon>
        <taxon>Blaberidae</taxon>
        <taxon>Blaberinae</taxon>
        <taxon>Blaberus</taxon>
    </lineage>
</organism>
<sequence>GSSGLISMPRV</sequence>